<feature type="chain" id="PRO_0000196540" description="Fumarate reductase subunit C">
    <location>
        <begin position="1"/>
        <end position="127"/>
    </location>
</feature>
<feature type="transmembrane region" description="Helical" evidence="1">
    <location>
        <begin position="30"/>
        <end position="50"/>
    </location>
</feature>
<feature type="transmembrane region" description="Helical" evidence="1">
    <location>
        <begin position="67"/>
        <end position="87"/>
    </location>
</feature>
<feature type="transmembrane region" description="Helical" evidence="1">
    <location>
        <begin position="107"/>
        <end position="127"/>
    </location>
</feature>
<evidence type="ECO:0000255" key="1">
    <source>
        <dbReference type="HAMAP-Rule" id="MF_00708"/>
    </source>
</evidence>
<sequence>MSNRKPYVREVKRTWWKDHPFYRFYMLREATVLPLILFTLFLTVGLGSLVKGPEAWQTWLNFMANPVVIAINIVALLGSLLHAHTFFSMMPQVMPIRLKGKPVDKKIIVLAQWAAVAFISLIVLIVV</sequence>
<proteinExistence type="inferred from homology"/>
<accession>Q7MGX5</accession>
<gene>
    <name evidence="1" type="primary">frdC</name>
    <name type="ordered locus">VV3099</name>
</gene>
<reference key="1">
    <citation type="journal article" date="2003" name="Genome Res.">
        <title>Comparative genome analysis of Vibrio vulnificus, a marine pathogen.</title>
        <authorList>
            <person name="Chen C.-Y."/>
            <person name="Wu K.-M."/>
            <person name="Chang Y.-C."/>
            <person name="Chang C.-H."/>
            <person name="Tsai H.-C."/>
            <person name="Liao T.-L."/>
            <person name="Liu Y.-M."/>
            <person name="Chen H.-J."/>
            <person name="Shen A.B.-T."/>
            <person name="Li J.-C."/>
            <person name="Su T.-L."/>
            <person name="Shao C.-P."/>
            <person name="Lee C.-T."/>
            <person name="Hor L.-I."/>
            <person name="Tsai S.-F."/>
        </authorList>
    </citation>
    <scope>NUCLEOTIDE SEQUENCE [LARGE SCALE GENOMIC DNA]</scope>
    <source>
        <strain>YJ016</strain>
    </source>
</reference>
<comment type="function">
    <text evidence="1">Anchors the catalytic components of the fumarate reductase complex to the cell membrane, binds quinones.</text>
</comment>
<comment type="subunit">
    <text evidence="1">Part of an enzyme complex containing four subunits: a flavoprotein (FrdA), an iron-sulfur protein (FrdB), and two hydrophobic anchor proteins (FrdC and FrdD).</text>
</comment>
<comment type="subcellular location">
    <subcellularLocation>
        <location evidence="1">Cell inner membrane</location>
        <topology evidence="1">Multi-pass membrane protein</topology>
    </subcellularLocation>
</comment>
<comment type="similarity">
    <text evidence="1">Belongs to the FrdC family.</text>
</comment>
<dbReference type="EMBL" id="BA000037">
    <property type="protein sequence ID" value="BAC95863.1"/>
    <property type="molecule type" value="Genomic_DNA"/>
</dbReference>
<dbReference type="RefSeq" id="WP_011079252.1">
    <property type="nucleotide sequence ID" value="NC_005139.1"/>
</dbReference>
<dbReference type="SMR" id="Q7MGX5"/>
<dbReference type="STRING" id="672.VV93_v1c28220"/>
<dbReference type="GeneID" id="93895534"/>
<dbReference type="KEGG" id="vvy:VV3099"/>
<dbReference type="eggNOG" id="COG3029">
    <property type="taxonomic scope" value="Bacteria"/>
</dbReference>
<dbReference type="HOGENOM" id="CLU_156492_0_0_6"/>
<dbReference type="Proteomes" id="UP000002675">
    <property type="component" value="Chromosome I"/>
</dbReference>
<dbReference type="GO" id="GO:0045283">
    <property type="term" value="C:fumarate reductase complex"/>
    <property type="evidence" value="ECO:0007669"/>
    <property type="project" value="UniProtKB-UniRule"/>
</dbReference>
<dbReference type="GO" id="GO:0005886">
    <property type="term" value="C:plasma membrane"/>
    <property type="evidence" value="ECO:0007669"/>
    <property type="project" value="UniProtKB-SubCell"/>
</dbReference>
<dbReference type="GO" id="GO:0000104">
    <property type="term" value="F:succinate dehydrogenase activity"/>
    <property type="evidence" value="ECO:0007669"/>
    <property type="project" value="UniProtKB-UniRule"/>
</dbReference>
<dbReference type="CDD" id="cd00546">
    <property type="entry name" value="QFR_TypeD_subunitC"/>
    <property type="match status" value="1"/>
</dbReference>
<dbReference type="Gene3D" id="1.20.1300.10">
    <property type="entry name" value="Fumarate reductase/succinate dehydrogenase, transmembrane subunit"/>
    <property type="match status" value="1"/>
</dbReference>
<dbReference type="HAMAP" id="MF_00708">
    <property type="entry name" value="Fumarate_red_C"/>
    <property type="match status" value="1"/>
</dbReference>
<dbReference type="InterPro" id="IPR003510">
    <property type="entry name" value="Fumarate_red_C"/>
</dbReference>
<dbReference type="InterPro" id="IPR034804">
    <property type="entry name" value="SQR/QFR_C/D"/>
</dbReference>
<dbReference type="NCBIfam" id="NF003445">
    <property type="entry name" value="PRK04987.1"/>
    <property type="match status" value="1"/>
</dbReference>
<dbReference type="Pfam" id="PF02300">
    <property type="entry name" value="Fumarate_red_C"/>
    <property type="match status" value="1"/>
</dbReference>
<dbReference type="PIRSF" id="PIRSF000180">
    <property type="entry name" value="FrdC"/>
    <property type="match status" value="1"/>
</dbReference>
<dbReference type="SUPFAM" id="SSF81343">
    <property type="entry name" value="Fumarate reductase respiratory complex transmembrane subunits"/>
    <property type="match status" value="1"/>
</dbReference>
<keyword id="KW-0997">Cell inner membrane</keyword>
<keyword id="KW-1003">Cell membrane</keyword>
<keyword id="KW-0472">Membrane</keyword>
<keyword id="KW-0812">Transmembrane</keyword>
<keyword id="KW-1133">Transmembrane helix</keyword>
<organism>
    <name type="scientific">Vibrio vulnificus (strain YJ016)</name>
    <dbReference type="NCBI Taxonomy" id="196600"/>
    <lineage>
        <taxon>Bacteria</taxon>
        <taxon>Pseudomonadati</taxon>
        <taxon>Pseudomonadota</taxon>
        <taxon>Gammaproteobacteria</taxon>
        <taxon>Vibrionales</taxon>
        <taxon>Vibrionaceae</taxon>
        <taxon>Vibrio</taxon>
    </lineage>
</organism>
<name>FRDC_VIBVY</name>
<protein>
    <recommendedName>
        <fullName evidence="1">Fumarate reductase subunit C</fullName>
    </recommendedName>
    <alternativeName>
        <fullName evidence="1">Quinol-fumarate reductase subunit C</fullName>
        <shortName evidence="1">QFR subunit C</shortName>
    </alternativeName>
</protein>